<dbReference type="EC" id="6.1.1.7" evidence="1"/>
<dbReference type="EMBL" id="CP000086">
    <property type="protein sequence ID" value="ABC37237.1"/>
    <property type="molecule type" value="Genomic_DNA"/>
</dbReference>
<dbReference type="RefSeq" id="WP_009891699.1">
    <property type="nucleotide sequence ID" value="NZ_CP008785.1"/>
</dbReference>
<dbReference type="SMR" id="Q2SV73"/>
<dbReference type="GeneID" id="45122366"/>
<dbReference type="KEGG" id="bte:BTH_I2661"/>
<dbReference type="HOGENOM" id="CLU_004485_1_1_4"/>
<dbReference type="Proteomes" id="UP000001930">
    <property type="component" value="Chromosome I"/>
</dbReference>
<dbReference type="GO" id="GO:0005829">
    <property type="term" value="C:cytosol"/>
    <property type="evidence" value="ECO:0007669"/>
    <property type="project" value="TreeGrafter"/>
</dbReference>
<dbReference type="GO" id="GO:0004813">
    <property type="term" value="F:alanine-tRNA ligase activity"/>
    <property type="evidence" value="ECO:0007669"/>
    <property type="project" value="UniProtKB-UniRule"/>
</dbReference>
<dbReference type="GO" id="GO:0002161">
    <property type="term" value="F:aminoacyl-tRNA deacylase activity"/>
    <property type="evidence" value="ECO:0007669"/>
    <property type="project" value="TreeGrafter"/>
</dbReference>
<dbReference type="GO" id="GO:0005524">
    <property type="term" value="F:ATP binding"/>
    <property type="evidence" value="ECO:0007669"/>
    <property type="project" value="UniProtKB-UniRule"/>
</dbReference>
<dbReference type="GO" id="GO:0000049">
    <property type="term" value="F:tRNA binding"/>
    <property type="evidence" value="ECO:0007669"/>
    <property type="project" value="UniProtKB-KW"/>
</dbReference>
<dbReference type="GO" id="GO:0008270">
    <property type="term" value="F:zinc ion binding"/>
    <property type="evidence" value="ECO:0007669"/>
    <property type="project" value="UniProtKB-UniRule"/>
</dbReference>
<dbReference type="GO" id="GO:0006419">
    <property type="term" value="P:alanyl-tRNA aminoacylation"/>
    <property type="evidence" value="ECO:0007669"/>
    <property type="project" value="UniProtKB-UniRule"/>
</dbReference>
<dbReference type="GO" id="GO:0045892">
    <property type="term" value="P:negative regulation of DNA-templated transcription"/>
    <property type="evidence" value="ECO:0007669"/>
    <property type="project" value="TreeGrafter"/>
</dbReference>
<dbReference type="CDD" id="cd00673">
    <property type="entry name" value="AlaRS_core"/>
    <property type="match status" value="1"/>
</dbReference>
<dbReference type="FunFam" id="2.40.30.130:FF:000001">
    <property type="entry name" value="Alanine--tRNA ligase"/>
    <property type="match status" value="1"/>
</dbReference>
<dbReference type="FunFam" id="3.10.310.40:FF:000001">
    <property type="entry name" value="Alanine--tRNA ligase"/>
    <property type="match status" value="1"/>
</dbReference>
<dbReference type="FunFam" id="3.30.54.20:FF:000001">
    <property type="entry name" value="Alanine--tRNA ligase"/>
    <property type="match status" value="1"/>
</dbReference>
<dbReference type="FunFam" id="3.30.930.10:FF:000004">
    <property type="entry name" value="Alanine--tRNA ligase"/>
    <property type="match status" value="1"/>
</dbReference>
<dbReference type="FunFam" id="3.30.980.10:FF:000004">
    <property type="entry name" value="Alanine--tRNA ligase, cytoplasmic"/>
    <property type="match status" value="1"/>
</dbReference>
<dbReference type="Gene3D" id="2.40.30.130">
    <property type="match status" value="1"/>
</dbReference>
<dbReference type="Gene3D" id="3.10.310.40">
    <property type="match status" value="1"/>
</dbReference>
<dbReference type="Gene3D" id="3.30.54.20">
    <property type="match status" value="1"/>
</dbReference>
<dbReference type="Gene3D" id="6.10.250.550">
    <property type="match status" value="1"/>
</dbReference>
<dbReference type="Gene3D" id="3.30.930.10">
    <property type="entry name" value="Bira Bifunctional Protein, Domain 2"/>
    <property type="match status" value="1"/>
</dbReference>
<dbReference type="Gene3D" id="3.30.980.10">
    <property type="entry name" value="Threonyl-trna Synthetase, Chain A, domain 2"/>
    <property type="match status" value="1"/>
</dbReference>
<dbReference type="HAMAP" id="MF_00036_B">
    <property type="entry name" value="Ala_tRNA_synth_B"/>
    <property type="match status" value="1"/>
</dbReference>
<dbReference type="InterPro" id="IPR045864">
    <property type="entry name" value="aa-tRNA-synth_II/BPL/LPL"/>
</dbReference>
<dbReference type="InterPro" id="IPR002318">
    <property type="entry name" value="Ala-tRNA-lgiase_IIc"/>
</dbReference>
<dbReference type="InterPro" id="IPR018162">
    <property type="entry name" value="Ala-tRNA-ligase_IIc_anticod-bd"/>
</dbReference>
<dbReference type="InterPro" id="IPR018165">
    <property type="entry name" value="Ala-tRNA-synth_IIc_core"/>
</dbReference>
<dbReference type="InterPro" id="IPR018164">
    <property type="entry name" value="Ala-tRNA-synth_IIc_N"/>
</dbReference>
<dbReference type="InterPro" id="IPR050058">
    <property type="entry name" value="Ala-tRNA_ligase"/>
</dbReference>
<dbReference type="InterPro" id="IPR023033">
    <property type="entry name" value="Ala_tRNA_ligase_euk/bac"/>
</dbReference>
<dbReference type="InterPro" id="IPR003156">
    <property type="entry name" value="DHHA1_dom"/>
</dbReference>
<dbReference type="InterPro" id="IPR018163">
    <property type="entry name" value="Thr/Ala-tRNA-synth_IIc_edit"/>
</dbReference>
<dbReference type="InterPro" id="IPR009000">
    <property type="entry name" value="Transl_B-barrel_sf"/>
</dbReference>
<dbReference type="InterPro" id="IPR012947">
    <property type="entry name" value="tRNA_SAD"/>
</dbReference>
<dbReference type="NCBIfam" id="TIGR00344">
    <property type="entry name" value="alaS"/>
    <property type="match status" value="1"/>
</dbReference>
<dbReference type="PANTHER" id="PTHR11777:SF9">
    <property type="entry name" value="ALANINE--TRNA LIGASE, CYTOPLASMIC"/>
    <property type="match status" value="1"/>
</dbReference>
<dbReference type="PANTHER" id="PTHR11777">
    <property type="entry name" value="ALANYL-TRNA SYNTHETASE"/>
    <property type="match status" value="1"/>
</dbReference>
<dbReference type="Pfam" id="PF02272">
    <property type="entry name" value="DHHA1"/>
    <property type="match status" value="1"/>
</dbReference>
<dbReference type="Pfam" id="PF01411">
    <property type="entry name" value="tRNA-synt_2c"/>
    <property type="match status" value="1"/>
</dbReference>
<dbReference type="Pfam" id="PF07973">
    <property type="entry name" value="tRNA_SAD"/>
    <property type="match status" value="1"/>
</dbReference>
<dbReference type="PRINTS" id="PR00980">
    <property type="entry name" value="TRNASYNTHALA"/>
</dbReference>
<dbReference type="SMART" id="SM00863">
    <property type="entry name" value="tRNA_SAD"/>
    <property type="match status" value="1"/>
</dbReference>
<dbReference type="SUPFAM" id="SSF55681">
    <property type="entry name" value="Class II aaRS and biotin synthetases"/>
    <property type="match status" value="1"/>
</dbReference>
<dbReference type="SUPFAM" id="SSF101353">
    <property type="entry name" value="Putative anticodon-binding domain of alanyl-tRNA synthetase (AlaRS)"/>
    <property type="match status" value="1"/>
</dbReference>
<dbReference type="SUPFAM" id="SSF55186">
    <property type="entry name" value="ThrRS/AlaRS common domain"/>
    <property type="match status" value="1"/>
</dbReference>
<dbReference type="SUPFAM" id="SSF50447">
    <property type="entry name" value="Translation proteins"/>
    <property type="match status" value="1"/>
</dbReference>
<dbReference type="PROSITE" id="PS50860">
    <property type="entry name" value="AA_TRNA_LIGASE_II_ALA"/>
    <property type="match status" value="1"/>
</dbReference>
<gene>
    <name evidence="1" type="primary">alaS</name>
    <name type="ordered locus">BTH_I2661</name>
</gene>
<protein>
    <recommendedName>
        <fullName evidence="1">Alanine--tRNA ligase</fullName>
        <ecNumber evidence="1">6.1.1.7</ecNumber>
    </recommendedName>
    <alternativeName>
        <fullName evidence="1">Alanyl-tRNA synthetase</fullName>
        <shortName evidence="1">AlaRS</shortName>
    </alternativeName>
</protein>
<keyword id="KW-0030">Aminoacyl-tRNA synthetase</keyword>
<keyword id="KW-0067">ATP-binding</keyword>
<keyword id="KW-0963">Cytoplasm</keyword>
<keyword id="KW-0436">Ligase</keyword>
<keyword id="KW-0479">Metal-binding</keyword>
<keyword id="KW-0547">Nucleotide-binding</keyword>
<keyword id="KW-0648">Protein biosynthesis</keyword>
<keyword id="KW-0694">RNA-binding</keyword>
<keyword id="KW-0820">tRNA-binding</keyword>
<keyword id="KW-0862">Zinc</keyword>
<comment type="function">
    <text evidence="1">Catalyzes the attachment of alanine to tRNA(Ala) in a two-step reaction: alanine is first activated by ATP to form Ala-AMP and then transferred to the acceptor end of tRNA(Ala). Also edits incorrectly charged Ser-tRNA(Ala) and Gly-tRNA(Ala) via its editing domain.</text>
</comment>
<comment type="catalytic activity">
    <reaction evidence="1">
        <text>tRNA(Ala) + L-alanine + ATP = L-alanyl-tRNA(Ala) + AMP + diphosphate</text>
        <dbReference type="Rhea" id="RHEA:12540"/>
        <dbReference type="Rhea" id="RHEA-COMP:9657"/>
        <dbReference type="Rhea" id="RHEA-COMP:9923"/>
        <dbReference type="ChEBI" id="CHEBI:30616"/>
        <dbReference type="ChEBI" id="CHEBI:33019"/>
        <dbReference type="ChEBI" id="CHEBI:57972"/>
        <dbReference type="ChEBI" id="CHEBI:78442"/>
        <dbReference type="ChEBI" id="CHEBI:78497"/>
        <dbReference type="ChEBI" id="CHEBI:456215"/>
        <dbReference type="EC" id="6.1.1.7"/>
    </reaction>
</comment>
<comment type="cofactor">
    <cofactor evidence="1">
        <name>Zn(2+)</name>
        <dbReference type="ChEBI" id="CHEBI:29105"/>
    </cofactor>
    <text evidence="1">Binds 1 zinc ion per subunit.</text>
</comment>
<comment type="subcellular location">
    <subcellularLocation>
        <location evidence="1">Cytoplasm</location>
    </subcellularLocation>
</comment>
<comment type="domain">
    <text evidence="1">Consists of three domains; the N-terminal catalytic domain, the editing domain and the C-terminal C-Ala domain. The editing domain removes incorrectly charged amino acids, while the C-Ala domain, along with tRNA(Ala), serves as a bridge to cooperatively bring together the editing and aminoacylation centers thus stimulating deacylation of misacylated tRNAs.</text>
</comment>
<comment type="similarity">
    <text evidence="1">Belongs to the class-II aminoacyl-tRNA synthetase family.</text>
</comment>
<evidence type="ECO:0000255" key="1">
    <source>
        <dbReference type="HAMAP-Rule" id="MF_00036"/>
    </source>
</evidence>
<sequence>MKAAEIREKFLKFFESKGHTIVRSSSLVPGNDPTLLFTNSGMVQFKDVFLGAETRPYSRATTAQRSVRAGGKHNDLENVGYTARHHTFFEMLGNFSFGDYFKRDAIHYAWELLTTVYKLPADKLWVTVYHDDDEAYDIWAKEVGVPAERIIRIGDNKGARYASDNFWQMGDTGPCGPCSEIFYDHGPGVWGGPPGSPEEDGDRYIEIWNLVFMQFNRDAQGNMTRLPKPCVDTGMGLERIAAVLQHVHSNYEIDLFQQLIKASARETGVADLANNSLKVIADHIRACSFLIVDGVIPGNEGRGYVLRRIVRRAIRHGYKLGRKGPFFHKLVADLVAEMGAAYPELKEAEQRVTDVLRQEEERFFETIEHGMSILEAALADLDAAGGKTLDGELAFKLHDTYGFPLDLTADVCRERGVTVDEPAFDDAMARQREQARAAGKFKATQGLEYTGAKTTFHGYEEIAFDDAKVVALYVEGASVGEVKAGESAVVVLDHTPFYAESGGQVGDQGVLANAATRFAVADTLKVQADVIGHHGELEQGVLKVGDAVRAEIDAARRARTARNHSATHLMHKALRDVLGSHVQQKGSLVDADKTRFDFAHNAPLTDDEIRRVEAIVNEQVLANAPGIVRVMPYDDAVKGGAMALFGEKYGDEVRVLDLGFSRELCGGTHVHRTGDIGLFKIVAEGGVAAGIRRVEAITGDNAVRYVQALDARVNAAAAALKAQPSELIQRIGQVQDQVKSLEKELGALKSKLASSQGDELAQQAVEVGGVHVLAATLDGADAKTLRETVDKLKDKLKSAAIVLAAVDGGKVSLIAGVTADASKKVKAGELVNFVAQQVGGKGGGRPDMAQAGGTEPANLPAALAGVKGWVEERL</sequence>
<proteinExistence type="inferred from homology"/>
<accession>Q2SV73</accession>
<name>SYA_BURTA</name>
<reference key="1">
    <citation type="journal article" date="2005" name="BMC Genomics">
        <title>Bacterial genome adaptation to niches: divergence of the potential virulence genes in three Burkholderia species of different survival strategies.</title>
        <authorList>
            <person name="Kim H.S."/>
            <person name="Schell M.A."/>
            <person name="Yu Y."/>
            <person name="Ulrich R.L."/>
            <person name="Sarria S.H."/>
            <person name="Nierman W.C."/>
            <person name="DeShazer D."/>
        </authorList>
    </citation>
    <scope>NUCLEOTIDE SEQUENCE [LARGE SCALE GENOMIC DNA]</scope>
    <source>
        <strain>ATCC 700388 / DSM 13276 / CCUG 48851 / CIP 106301 / E264</strain>
    </source>
</reference>
<feature type="chain" id="PRO_0000347534" description="Alanine--tRNA ligase">
    <location>
        <begin position="1"/>
        <end position="874"/>
    </location>
</feature>
<feature type="binding site" evidence="1">
    <location>
        <position position="564"/>
    </location>
    <ligand>
        <name>Zn(2+)</name>
        <dbReference type="ChEBI" id="CHEBI:29105"/>
    </ligand>
</feature>
<feature type="binding site" evidence="1">
    <location>
        <position position="568"/>
    </location>
    <ligand>
        <name>Zn(2+)</name>
        <dbReference type="ChEBI" id="CHEBI:29105"/>
    </ligand>
</feature>
<feature type="binding site" evidence="1">
    <location>
        <position position="665"/>
    </location>
    <ligand>
        <name>Zn(2+)</name>
        <dbReference type="ChEBI" id="CHEBI:29105"/>
    </ligand>
</feature>
<feature type="binding site" evidence="1">
    <location>
        <position position="669"/>
    </location>
    <ligand>
        <name>Zn(2+)</name>
        <dbReference type="ChEBI" id="CHEBI:29105"/>
    </ligand>
</feature>
<organism>
    <name type="scientific">Burkholderia thailandensis (strain ATCC 700388 / DSM 13276 / CCUG 48851 / CIP 106301 / E264)</name>
    <dbReference type="NCBI Taxonomy" id="271848"/>
    <lineage>
        <taxon>Bacteria</taxon>
        <taxon>Pseudomonadati</taxon>
        <taxon>Pseudomonadota</taxon>
        <taxon>Betaproteobacteria</taxon>
        <taxon>Burkholderiales</taxon>
        <taxon>Burkholderiaceae</taxon>
        <taxon>Burkholderia</taxon>
        <taxon>pseudomallei group</taxon>
    </lineage>
</organism>